<sequence>MKNNAQLLMPREKMLKFGISALTDVELLALFLRTGTRGKDVLTLAKEMLENFGSLYGLLTSEYEQFSGVHGIGVAKFAQLKGIAELARRYYNVRMREESPLLSPEMTREFLQSQLTGEEREIFMVIFLDSQHRVITHSRLFSGTLNHVEVHPREIIREAIKINASALILAHNHPSGCAEPSKADKLITERIIKSCQFMDLRVLDHIVIGRGEYVSFAERGWI</sequence>
<evidence type="ECO:0000255" key="1">
    <source>
        <dbReference type="HAMAP-Rule" id="MF_00018"/>
    </source>
</evidence>
<evidence type="ECO:0000255" key="2">
    <source>
        <dbReference type="PROSITE-ProRule" id="PRU01182"/>
    </source>
</evidence>
<evidence type="ECO:0000305" key="3"/>
<protein>
    <recommendedName>
        <fullName evidence="1">UPF0758 protein YicR</fullName>
    </recommendedName>
</protein>
<name>YICR_ECOL5</name>
<comment type="similarity">
    <text evidence="1">Belongs to the UPF0758 family. YicR subfamily.</text>
</comment>
<comment type="sequence caution" evidence="3">
    <conflict type="erroneous initiation">
        <sequence resource="EMBL-CDS" id="ABG71708"/>
    </conflict>
</comment>
<proteinExistence type="inferred from homology"/>
<organism>
    <name type="scientific">Escherichia coli O6:K15:H31 (strain 536 / UPEC)</name>
    <dbReference type="NCBI Taxonomy" id="362663"/>
    <lineage>
        <taxon>Bacteria</taxon>
        <taxon>Pseudomonadati</taxon>
        <taxon>Pseudomonadota</taxon>
        <taxon>Gammaproteobacteria</taxon>
        <taxon>Enterobacterales</taxon>
        <taxon>Enterobacteriaceae</taxon>
        <taxon>Escherichia</taxon>
    </lineage>
</organism>
<feature type="chain" id="PRO_0000322689" description="UPF0758 protein YicR">
    <location>
        <begin position="1"/>
        <end position="222"/>
    </location>
</feature>
<feature type="domain" description="MPN" evidence="2">
    <location>
        <begin position="100"/>
        <end position="222"/>
    </location>
</feature>
<feature type="short sequence motif" description="JAMM motif" evidence="2">
    <location>
        <begin position="171"/>
        <end position="184"/>
    </location>
</feature>
<feature type="binding site" evidence="2">
    <location>
        <position position="171"/>
    </location>
    <ligand>
        <name>Zn(2+)</name>
        <dbReference type="ChEBI" id="CHEBI:29105"/>
        <note>catalytic</note>
    </ligand>
</feature>
<feature type="binding site" evidence="2">
    <location>
        <position position="173"/>
    </location>
    <ligand>
        <name>Zn(2+)</name>
        <dbReference type="ChEBI" id="CHEBI:29105"/>
        <note>catalytic</note>
    </ligand>
</feature>
<feature type="binding site" evidence="2">
    <location>
        <position position="184"/>
    </location>
    <ligand>
        <name>Zn(2+)</name>
        <dbReference type="ChEBI" id="CHEBI:29105"/>
        <note>catalytic</note>
    </ligand>
</feature>
<reference key="1">
    <citation type="journal article" date="2006" name="Mol. Microbiol.">
        <title>Role of pathogenicity island-associated integrases in the genome plasticity of uropathogenic Escherichia coli strain 536.</title>
        <authorList>
            <person name="Hochhut B."/>
            <person name="Wilde C."/>
            <person name="Balling G."/>
            <person name="Middendorf B."/>
            <person name="Dobrindt U."/>
            <person name="Brzuszkiewicz E."/>
            <person name="Gottschalk G."/>
            <person name="Carniel E."/>
            <person name="Hacker J."/>
        </authorList>
    </citation>
    <scope>NUCLEOTIDE SEQUENCE [LARGE SCALE GENOMIC DNA]</scope>
    <source>
        <strain>536 / UPEC</strain>
    </source>
</reference>
<keyword id="KW-0378">Hydrolase</keyword>
<keyword id="KW-0479">Metal-binding</keyword>
<keyword id="KW-0482">Metalloprotease</keyword>
<keyword id="KW-0645">Protease</keyword>
<keyword id="KW-0862">Zinc</keyword>
<gene>
    <name evidence="1" type="primary">yicR</name>
    <name type="ordered locus">ECP_3736</name>
</gene>
<accession>Q0TBH1</accession>
<dbReference type="EMBL" id="CP000247">
    <property type="protein sequence ID" value="ABG71708.1"/>
    <property type="status" value="ALT_INIT"/>
    <property type="molecule type" value="Genomic_DNA"/>
</dbReference>
<dbReference type="SMR" id="Q0TBH1"/>
<dbReference type="KEGG" id="ecp:ECP_3736"/>
<dbReference type="HOGENOM" id="CLU_073529_0_1_6"/>
<dbReference type="Proteomes" id="UP000009182">
    <property type="component" value="Chromosome"/>
</dbReference>
<dbReference type="GO" id="GO:0046872">
    <property type="term" value="F:metal ion binding"/>
    <property type="evidence" value="ECO:0007669"/>
    <property type="project" value="UniProtKB-KW"/>
</dbReference>
<dbReference type="GO" id="GO:0008237">
    <property type="term" value="F:metallopeptidase activity"/>
    <property type="evidence" value="ECO:0007669"/>
    <property type="project" value="UniProtKB-KW"/>
</dbReference>
<dbReference type="GO" id="GO:0006508">
    <property type="term" value="P:proteolysis"/>
    <property type="evidence" value="ECO:0007669"/>
    <property type="project" value="UniProtKB-KW"/>
</dbReference>
<dbReference type="CDD" id="cd08071">
    <property type="entry name" value="MPN_DUF2466"/>
    <property type="match status" value="1"/>
</dbReference>
<dbReference type="Gene3D" id="3.40.140.10">
    <property type="entry name" value="Cytidine Deaminase, domain 2"/>
    <property type="match status" value="1"/>
</dbReference>
<dbReference type="HAMAP" id="MF_00018">
    <property type="entry name" value="UPF0758_YicR"/>
    <property type="match status" value="1"/>
</dbReference>
<dbReference type="InterPro" id="IPR037518">
    <property type="entry name" value="MPN"/>
</dbReference>
<dbReference type="InterPro" id="IPR025657">
    <property type="entry name" value="RadC_JAB"/>
</dbReference>
<dbReference type="InterPro" id="IPR010994">
    <property type="entry name" value="RuvA_2-like"/>
</dbReference>
<dbReference type="InterPro" id="IPR001405">
    <property type="entry name" value="UPF0758"/>
</dbReference>
<dbReference type="InterPro" id="IPR020891">
    <property type="entry name" value="UPF0758_CS"/>
</dbReference>
<dbReference type="InterPro" id="IPR046778">
    <property type="entry name" value="UPF0758_N"/>
</dbReference>
<dbReference type="InterPro" id="IPR022820">
    <property type="entry name" value="UPF0758_YicR"/>
</dbReference>
<dbReference type="NCBIfam" id="NF000642">
    <property type="entry name" value="PRK00024.1"/>
    <property type="match status" value="1"/>
</dbReference>
<dbReference type="NCBIfam" id="TIGR00608">
    <property type="entry name" value="radc"/>
    <property type="match status" value="1"/>
</dbReference>
<dbReference type="PANTHER" id="PTHR30471">
    <property type="entry name" value="DNA REPAIR PROTEIN RADC"/>
    <property type="match status" value="1"/>
</dbReference>
<dbReference type="PANTHER" id="PTHR30471:SF3">
    <property type="entry name" value="UPF0758 PROTEIN YEES-RELATED"/>
    <property type="match status" value="1"/>
</dbReference>
<dbReference type="Pfam" id="PF04002">
    <property type="entry name" value="RadC"/>
    <property type="match status" value="1"/>
</dbReference>
<dbReference type="Pfam" id="PF20582">
    <property type="entry name" value="UPF0758_N"/>
    <property type="match status" value="1"/>
</dbReference>
<dbReference type="SUPFAM" id="SSF47781">
    <property type="entry name" value="RuvA domain 2-like"/>
    <property type="match status" value="1"/>
</dbReference>
<dbReference type="PROSITE" id="PS50249">
    <property type="entry name" value="MPN"/>
    <property type="match status" value="1"/>
</dbReference>
<dbReference type="PROSITE" id="PS01302">
    <property type="entry name" value="UPF0758"/>
    <property type="match status" value="1"/>
</dbReference>